<dbReference type="EC" id="3.6.4.13"/>
<dbReference type="EMBL" id="AM270176">
    <property type="protein sequence ID" value="CAK45672.1"/>
    <property type="molecule type" value="Genomic_DNA"/>
</dbReference>
<dbReference type="RefSeq" id="XP_001392896.1">
    <property type="nucleotide sequence ID" value="XM_001392859.1"/>
</dbReference>
<dbReference type="SMR" id="A2QS00"/>
<dbReference type="EnsemblFungi" id="CAK45672">
    <property type="protein sequence ID" value="CAK45672"/>
    <property type="gene ID" value="An08g07790"/>
</dbReference>
<dbReference type="GeneID" id="4983098"/>
<dbReference type="KEGG" id="ang:An08g07790"/>
<dbReference type="VEuPathDB" id="FungiDB:An08g07790"/>
<dbReference type="HOGENOM" id="CLU_003041_26_1_1"/>
<dbReference type="Proteomes" id="UP000006706">
    <property type="component" value="Chromosome 8R"/>
</dbReference>
<dbReference type="GO" id="GO:0005730">
    <property type="term" value="C:nucleolus"/>
    <property type="evidence" value="ECO:0007669"/>
    <property type="project" value="UniProtKB-SubCell"/>
</dbReference>
<dbReference type="GO" id="GO:0032040">
    <property type="term" value="C:small-subunit processome"/>
    <property type="evidence" value="ECO:0007669"/>
    <property type="project" value="EnsemblFungi"/>
</dbReference>
<dbReference type="GO" id="GO:0005524">
    <property type="term" value="F:ATP binding"/>
    <property type="evidence" value="ECO:0007669"/>
    <property type="project" value="UniProtKB-KW"/>
</dbReference>
<dbReference type="GO" id="GO:0016887">
    <property type="term" value="F:ATP hydrolysis activity"/>
    <property type="evidence" value="ECO:0007669"/>
    <property type="project" value="RHEA"/>
</dbReference>
<dbReference type="GO" id="GO:0042802">
    <property type="term" value="F:identical protein binding"/>
    <property type="evidence" value="ECO:0007669"/>
    <property type="project" value="EnsemblFungi"/>
</dbReference>
<dbReference type="GO" id="GO:0003723">
    <property type="term" value="F:RNA binding"/>
    <property type="evidence" value="ECO:0007669"/>
    <property type="project" value="UniProtKB-KW"/>
</dbReference>
<dbReference type="GO" id="GO:0003724">
    <property type="term" value="F:RNA helicase activity"/>
    <property type="evidence" value="ECO:0007669"/>
    <property type="project" value="UniProtKB-EC"/>
</dbReference>
<dbReference type="GO" id="GO:0006364">
    <property type="term" value="P:rRNA processing"/>
    <property type="evidence" value="ECO:0007669"/>
    <property type="project" value="UniProtKB-KW"/>
</dbReference>
<dbReference type="CDD" id="cd17941">
    <property type="entry name" value="DEADc_DDX10"/>
    <property type="match status" value="1"/>
</dbReference>
<dbReference type="CDD" id="cd18787">
    <property type="entry name" value="SF2_C_DEAD"/>
    <property type="match status" value="1"/>
</dbReference>
<dbReference type="Gene3D" id="3.40.50.300">
    <property type="entry name" value="P-loop containing nucleotide triphosphate hydrolases"/>
    <property type="match status" value="2"/>
</dbReference>
<dbReference type="InterPro" id="IPR011545">
    <property type="entry name" value="DEAD/DEAH_box_helicase_dom"/>
</dbReference>
<dbReference type="InterPro" id="IPR014001">
    <property type="entry name" value="Helicase_ATP-bd"/>
</dbReference>
<dbReference type="InterPro" id="IPR001650">
    <property type="entry name" value="Helicase_C-like"/>
</dbReference>
<dbReference type="InterPro" id="IPR027417">
    <property type="entry name" value="P-loop_NTPase"/>
</dbReference>
<dbReference type="InterPro" id="IPR000629">
    <property type="entry name" value="RNA-helicase_DEAD-box_CS"/>
</dbReference>
<dbReference type="InterPro" id="IPR014014">
    <property type="entry name" value="RNA_helicase_DEAD_Q_motif"/>
</dbReference>
<dbReference type="InterPro" id="IPR025313">
    <property type="entry name" value="SPB4-like_CTE"/>
</dbReference>
<dbReference type="PANTHER" id="PTHR24031">
    <property type="entry name" value="RNA HELICASE"/>
    <property type="match status" value="1"/>
</dbReference>
<dbReference type="Pfam" id="PF13959">
    <property type="entry name" value="CTE_SPB4"/>
    <property type="match status" value="1"/>
</dbReference>
<dbReference type="Pfam" id="PF00270">
    <property type="entry name" value="DEAD"/>
    <property type="match status" value="1"/>
</dbReference>
<dbReference type="Pfam" id="PF00271">
    <property type="entry name" value="Helicase_C"/>
    <property type="match status" value="1"/>
</dbReference>
<dbReference type="SMART" id="SM00487">
    <property type="entry name" value="DEXDc"/>
    <property type="match status" value="1"/>
</dbReference>
<dbReference type="SMART" id="SM01178">
    <property type="entry name" value="DUF4217"/>
    <property type="match status" value="1"/>
</dbReference>
<dbReference type="SMART" id="SM00490">
    <property type="entry name" value="HELICc"/>
    <property type="match status" value="1"/>
</dbReference>
<dbReference type="SUPFAM" id="SSF52540">
    <property type="entry name" value="P-loop containing nucleoside triphosphate hydrolases"/>
    <property type="match status" value="2"/>
</dbReference>
<dbReference type="PROSITE" id="PS00039">
    <property type="entry name" value="DEAD_ATP_HELICASE"/>
    <property type="match status" value="1"/>
</dbReference>
<dbReference type="PROSITE" id="PS51192">
    <property type="entry name" value="HELICASE_ATP_BIND_1"/>
    <property type="match status" value="1"/>
</dbReference>
<dbReference type="PROSITE" id="PS51194">
    <property type="entry name" value="HELICASE_CTER"/>
    <property type="match status" value="1"/>
</dbReference>
<dbReference type="PROSITE" id="PS51195">
    <property type="entry name" value="Q_MOTIF"/>
    <property type="match status" value="1"/>
</dbReference>
<proteinExistence type="inferred from homology"/>
<accession>A2QS00</accession>
<sequence length="802" mass="90604">MAPINGSRNGKHSKPQRGGNLKRKRVQEDLNSLIKKVEDLDVKETIEQFTDLPLSEPTASGLASSHYKTLTDIQSRAISHALKGRDILGAAKTGSGKTLAFLIPILENLYRKQWSEHDGLGALVLSPTRELAIQIFEVLRKVGRYHTFSAGLVIGGKSLREEQERLGRMNILVCTPGRMLQHLDQTSFFETHNLQMLVLDEADRILDMGFQKTVDAIIGHLPKERQTLLFSATQTKKVSDLARLSLQDPEYVAVHEAASSATPSKLQQHYVVTPLPQKLDVLWSFIRSNLKSKTIVFLSSGKQVRFVYESFRHMQPGVPLMHLHGRQKQGGRLDITTKFSSAQHAVLFATDVAARGLDFPAVDWVIQLDCPEDADTYIHRVGRTARYERDGRAVLFLDPSEEKGMLKRLEQKKVQVERINVKANKQQSIKDQLQNMCFKDPELKYLGQKAFISYAKSVYVQKDKEIFNIKELKLDEFAGSLGLPGAPRIKFIKGDDTKERKNAPRATAYLSSDDESDEEGEKKKTKKDETQVRTKYDRMFERRNQDVLADHYHKLINDDGTMVETNKATEDADEDDDFLSVKRRYEAGDKDLDVGGSSSEDEEDADGTEKKGAKVVHLDGKEALVIDSKRREKLLKSKKKLLKFKGKGTKLIYDDEGNAHELYEMEDEEQFKAKGDAKEQQAKFLAEEAERTRQADLEDKEVAKQKKREKKEKRKARERELLAMEEEGGDLVQIPYKEGGLASDEDEEVLRPSKKARVSFADEASEEEPKPKKAKKSQPAGKAPEQIETLEDLESLAAGLLG</sequence>
<protein>
    <recommendedName>
        <fullName>ATP-dependent RNA helicase dbp4</fullName>
        <ecNumber>3.6.4.13</ecNumber>
    </recommendedName>
</protein>
<reference key="1">
    <citation type="journal article" date="2007" name="Nat. Biotechnol.">
        <title>Genome sequencing and analysis of the versatile cell factory Aspergillus niger CBS 513.88.</title>
        <authorList>
            <person name="Pel H.J."/>
            <person name="de Winde J.H."/>
            <person name="Archer D.B."/>
            <person name="Dyer P.S."/>
            <person name="Hofmann G."/>
            <person name="Schaap P.J."/>
            <person name="Turner G."/>
            <person name="de Vries R.P."/>
            <person name="Albang R."/>
            <person name="Albermann K."/>
            <person name="Andersen M.R."/>
            <person name="Bendtsen J.D."/>
            <person name="Benen J.A.E."/>
            <person name="van den Berg M."/>
            <person name="Breestraat S."/>
            <person name="Caddick M.X."/>
            <person name="Contreras R."/>
            <person name="Cornell M."/>
            <person name="Coutinho P.M."/>
            <person name="Danchin E.G.J."/>
            <person name="Debets A.J.M."/>
            <person name="Dekker P."/>
            <person name="van Dijck P.W.M."/>
            <person name="van Dijk A."/>
            <person name="Dijkhuizen L."/>
            <person name="Driessen A.J.M."/>
            <person name="d'Enfert C."/>
            <person name="Geysens S."/>
            <person name="Goosen C."/>
            <person name="Groot G.S.P."/>
            <person name="de Groot P.W.J."/>
            <person name="Guillemette T."/>
            <person name="Henrissat B."/>
            <person name="Herweijer M."/>
            <person name="van den Hombergh J.P.T.W."/>
            <person name="van den Hondel C.A.M.J.J."/>
            <person name="van der Heijden R.T.J.M."/>
            <person name="van der Kaaij R.M."/>
            <person name="Klis F.M."/>
            <person name="Kools H.J."/>
            <person name="Kubicek C.P."/>
            <person name="van Kuyk P.A."/>
            <person name="Lauber J."/>
            <person name="Lu X."/>
            <person name="van der Maarel M.J.E.C."/>
            <person name="Meulenberg R."/>
            <person name="Menke H."/>
            <person name="Mortimer M.A."/>
            <person name="Nielsen J."/>
            <person name="Oliver S.G."/>
            <person name="Olsthoorn M."/>
            <person name="Pal K."/>
            <person name="van Peij N.N.M.E."/>
            <person name="Ram A.F.J."/>
            <person name="Rinas U."/>
            <person name="Roubos J.A."/>
            <person name="Sagt C.M.J."/>
            <person name="Schmoll M."/>
            <person name="Sun J."/>
            <person name="Ussery D."/>
            <person name="Varga J."/>
            <person name="Vervecken W."/>
            <person name="van de Vondervoort P.J.J."/>
            <person name="Wedler H."/>
            <person name="Woesten H.A.B."/>
            <person name="Zeng A.-P."/>
            <person name="van Ooyen A.J.J."/>
            <person name="Visser J."/>
            <person name="Stam H."/>
        </authorList>
    </citation>
    <scope>NUCLEOTIDE SEQUENCE [LARGE SCALE GENOMIC DNA]</scope>
    <source>
        <strain>ATCC MYA-4892 / CBS 513.88 / FGSC A1513</strain>
    </source>
</reference>
<gene>
    <name type="primary">dbp4</name>
    <name type="ORF">An08g07790</name>
</gene>
<organism>
    <name type="scientific">Aspergillus niger (strain ATCC MYA-4892 / CBS 513.88 / FGSC A1513)</name>
    <dbReference type="NCBI Taxonomy" id="425011"/>
    <lineage>
        <taxon>Eukaryota</taxon>
        <taxon>Fungi</taxon>
        <taxon>Dikarya</taxon>
        <taxon>Ascomycota</taxon>
        <taxon>Pezizomycotina</taxon>
        <taxon>Eurotiomycetes</taxon>
        <taxon>Eurotiomycetidae</taxon>
        <taxon>Eurotiales</taxon>
        <taxon>Aspergillaceae</taxon>
        <taxon>Aspergillus</taxon>
        <taxon>Aspergillus subgen. Circumdati</taxon>
    </lineage>
</organism>
<evidence type="ECO:0000250" key="1"/>
<evidence type="ECO:0000255" key="2">
    <source>
        <dbReference type="PROSITE-ProRule" id="PRU00541"/>
    </source>
</evidence>
<evidence type="ECO:0000255" key="3">
    <source>
        <dbReference type="PROSITE-ProRule" id="PRU00542"/>
    </source>
</evidence>
<evidence type="ECO:0000256" key="4">
    <source>
        <dbReference type="SAM" id="MobiDB-lite"/>
    </source>
</evidence>
<evidence type="ECO:0000305" key="5"/>
<feature type="chain" id="PRO_0000281700" description="ATP-dependent RNA helicase dbp4">
    <location>
        <begin position="1"/>
        <end position="802"/>
    </location>
</feature>
<feature type="domain" description="Helicase ATP-binding" evidence="2">
    <location>
        <begin position="78"/>
        <end position="252"/>
    </location>
</feature>
<feature type="domain" description="Helicase C-terminal" evidence="3">
    <location>
        <begin position="274"/>
        <end position="437"/>
    </location>
</feature>
<feature type="region of interest" description="Disordered" evidence="4">
    <location>
        <begin position="1"/>
        <end position="24"/>
    </location>
</feature>
<feature type="region of interest" description="Disordered" evidence="4">
    <location>
        <begin position="494"/>
        <end position="538"/>
    </location>
</feature>
<feature type="region of interest" description="Disordered" evidence="4">
    <location>
        <begin position="589"/>
        <end position="614"/>
    </location>
</feature>
<feature type="region of interest" description="Disordered" evidence="4">
    <location>
        <begin position="685"/>
        <end position="802"/>
    </location>
</feature>
<feature type="short sequence motif" description="Q motif">
    <location>
        <begin position="47"/>
        <end position="75"/>
    </location>
</feature>
<feature type="short sequence motif" description="DEAD box">
    <location>
        <begin position="200"/>
        <end position="203"/>
    </location>
</feature>
<feature type="compositionally biased region" description="Basic residues" evidence="4">
    <location>
        <begin position="9"/>
        <end position="24"/>
    </location>
</feature>
<feature type="compositionally biased region" description="Basic and acidic residues" evidence="4">
    <location>
        <begin position="520"/>
        <end position="538"/>
    </location>
</feature>
<feature type="compositionally biased region" description="Basic and acidic residues" evidence="4">
    <location>
        <begin position="685"/>
        <end position="704"/>
    </location>
</feature>
<feature type="compositionally biased region" description="Basic residues" evidence="4">
    <location>
        <begin position="705"/>
        <end position="714"/>
    </location>
</feature>
<feature type="binding site" evidence="2">
    <location>
        <begin position="91"/>
        <end position="98"/>
    </location>
    <ligand>
        <name>ATP</name>
        <dbReference type="ChEBI" id="CHEBI:30616"/>
    </ligand>
</feature>
<keyword id="KW-0067">ATP-binding</keyword>
<keyword id="KW-0347">Helicase</keyword>
<keyword id="KW-0378">Hydrolase</keyword>
<keyword id="KW-0547">Nucleotide-binding</keyword>
<keyword id="KW-0539">Nucleus</keyword>
<keyword id="KW-1185">Reference proteome</keyword>
<keyword id="KW-0690">Ribosome biogenesis</keyword>
<keyword id="KW-0694">RNA-binding</keyword>
<keyword id="KW-0698">rRNA processing</keyword>
<name>DBP4_ASPNC</name>
<comment type="function">
    <text evidence="1">ATP-dependent RNA helicase required for ribosome biogenesis. Involved in the release of U14 snoRNA in pre-ribosomal complexes. Required for pre-rRNA cleavage at site A2 (By similarity).</text>
</comment>
<comment type="catalytic activity">
    <reaction>
        <text>ATP + H2O = ADP + phosphate + H(+)</text>
        <dbReference type="Rhea" id="RHEA:13065"/>
        <dbReference type="ChEBI" id="CHEBI:15377"/>
        <dbReference type="ChEBI" id="CHEBI:15378"/>
        <dbReference type="ChEBI" id="CHEBI:30616"/>
        <dbReference type="ChEBI" id="CHEBI:43474"/>
        <dbReference type="ChEBI" id="CHEBI:456216"/>
        <dbReference type="EC" id="3.6.4.13"/>
    </reaction>
</comment>
<comment type="subunit">
    <text evidence="1">Interacts with the U3 and U14 snoRNAs. Associates with pre-ribosomal complexes (By similarity).</text>
</comment>
<comment type="subcellular location">
    <subcellularLocation>
        <location evidence="1">Nucleus</location>
        <location evidence="1">Nucleolus</location>
    </subcellularLocation>
</comment>
<comment type="domain">
    <text>The Q motif is unique to and characteristic of the DEAD box family of RNA helicases and controls ATP binding and hydrolysis.</text>
</comment>
<comment type="similarity">
    <text evidence="5">Belongs to the DEAD box helicase family. DDX10/DBP4 subfamily.</text>
</comment>